<protein>
    <recommendedName>
        <fullName>Chemotactic transduction protein ChpE</fullName>
    </recommendedName>
</protein>
<proteinExistence type="inferred from homology"/>
<comment type="subcellular location">
    <subcellularLocation>
        <location evidence="2">Cell membrane</location>
        <topology evidence="2">Multi-pass membrane protein</topology>
    </subcellularLocation>
</comment>
<comment type="similarity">
    <text evidence="2">Belongs to the Rht family.</text>
</comment>
<evidence type="ECO:0000255" key="1"/>
<evidence type="ECO:0000305" key="2"/>
<name>CHPE_PSEAE</name>
<accession>O87005</accession>
<gene>
    <name type="primary">chpE</name>
    <name type="ordered locus">PA0417</name>
</gene>
<sequence length="203" mass="21290">MLAIFLAALLFGFAFNVSPGAVFSETLRRGLTGGFRPALLVQLGSLIGDAVWALLGLTGLALLLGYEQVRIPLTLACAAYLAWLGVQGLRDAWSPPLAAEDAGEQGRNAFGAGAAISLSNPKNVVYWGALGSALAGIVDGTPNQAQSLVFFAGFMLSSLIWCFCCAALVDWLRRNTSLFWHRVSYAGCGVLLLGLAGLALRGL</sequence>
<keyword id="KW-1003">Cell membrane</keyword>
<keyword id="KW-0472">Membrane</keyword>
<keyword id="KW-1185">Reference proteome</keyword>
<keyword id="KW-0812">Transmembrane</keyword>
<keyword id="KW-1133">Transmembrane helix</keyword>
<reference key="1">
    <citation type="submission" date="1996-11" db="EMBL/GenBank/DDBJ databases">
        <title>Pseudomonas aeruginosa chemotactic transduction genes pilL, chpA chpB and downstream genes chpC, chpD and chpE.</title>
        <authorList>
            <person name="Whitchurch C.B."/>
            <person name="Young M.D."/>
            <person name="Hobbs M."/>
            <person name="Mattick J.S."/>
        </authorList>
    </citation>
    <scope>NUCLEOTIDE SEQUENCE [GENOMIC DNA]</scope>
    <source>
        <strain>ATCC 15692 / DSM 22644 / CIP 104116 / JCM 14847 / LMG 12228 / 1C / PRS 101 / PAO1</strain>
    </source>
</reference>
<reference key="2">
    <citation type="journal article" date="2000" name="Nature">
        <title>Complete genome sequence of Pseudomonas aeruginosa PAO1, an opportunistic pathogen.</title>
        <authorList>
            <person name="Stover C.K."/>
            <person name="Pham X.-Q.T."/>
            <person name="Erwin A.L."/>
            <person name="Mizoguchi S.D."/>
            <person name="Warrener P."/>
            <person name="Hickey M.J."/>
            <person name="Brinkman F.S.L."/>
            <person name="Hufnagle W.O."/>
            <person name="Kowalik D.J."/>
            <person name="Lagrou M."/>
            <person name="Garber R.L."/>
            <person name="Goltry L."/>
            <person name="Tolentino E."/>
            <person name="Westbrock-Wadman S."/>
            <person name="Yuan Y."/>
            <person name="Brody L.L."/>
            <person name="Coulter S.N."/>
            <person name="Folger K.R."/>
            <person name="Kas A."/>
            <person name="Larbig K."/>
            <person name="Lim R.M."/>
            <person name="Smith K.A."/>
            <person name="Spencer D.H."/>
            <person name="Wong G.K.-S."/>
            <person name="Wu Z."/>
            <person name="Paulsen I.T."/>
            <person name="Reizer J."/>
            <person name="Saier M.H. Jr."/>
            <person name="Hancock R.E.W."/>
            <person name="Lory S."/>
            <person name="Olson M.V."/>
        </authorList>
    </citation>
    <scope>NUCLEOTIDE SEQUENCE [LARGE SCALE GENOMIC DNA]</scope>
    <source>
        <strain>ATCC 15692 / DSM 22644 / CIP 104116 / JCM 14847 / LMG 12228 / 1C / PRS 101 / PAO1</strain>
    </source>
</reference>
<feature type="chain" id="PRO_0000094740" description="Chemotactic transduction protein ChpE">
    <location>
        <begin position="1"/>
        <end position="203"/>
    </location>
</feature>
<feature type="transmembrane region" description="Helical" evidence="1">
    <location>
        <begin position="3"/>
        <end position="23"/>
    </location>
</feature>
<feature type="transmembrane region" description="Helical" evidence="1">
    <location>
        <begin position="46"/>
        <end position="66"/>
    </location>
</feature>
<feature type="transmembrane region" description="Helical" evidence="1">
    <location>
        <begin position="69"/>
        <end position="89"/>
    </location>
</feature>
<feature type="transmembrane region" description="Helical" evidence="1">
    <location>
        <begin position="123"/>
        <end position="143"/>
    </location>
</feature>
<feature type="transmembrane region" description="Helical" evidence="1">
    <location>
        <begin position="149"/>
        <end position="169"/>
    </location>
</feature>
<organism>
    <name type="scientific">Pseudomonas aeruginosa (strain ATCC 15692 / DSM 22644 / CIP 104116 / JCM 14847 / LMG 12228 / 1C / PRS 101 / PAO1)</name>
    <dbReference type="NCBI Taxonomy" id="208964"/>
    <lineage>
        <taxon>Bacteria</taxon>
        <taxon>Pseudomonadati</taxon>
        <taxon>Pseudomonadota</taxon>
        <taxon>Gammaproteobacteria</taxon>
        <taxon>Pseudomonadales</taxon>
        <taxon>Pseudomonadaceae</taxon>
        <taxon>Pseudomonas</taxon>
    </lineage>
</organism>
<dbReference type="EMBL" id="U79580">
    <property type="protein sequence ID" value="AAC23935.1"/>
    <property type="molecule type" value="Genomic_DNA"/>
</dbReference>
<dbReference type="EMBL" id="AE004091">
    <property type="protein sequence ID" value="AAG03806.1"/>
    <property type="molecule type" value="Genomic_DNA"/>
</dbReference>
<dbReference type="PIR" id="T30317">
    <property type="entry name" value="T30317"/>
</dbReference>
<dbReference type="RefSeq" id="NP_249108.1">
    <property type="nucleotide sequence ID" value="NC_002516.2"/>
</dbReference>
<dbReference type="RefSeq" id="WP_003084610.1">
    <property type="nucleotide sequence ID" value="NZ_QZGE01000016.1"/>
</dbReference>
<dbReference type="STRING" id="208964.PA0417"/>
<dbReference type="PaxDb" id="208964-PA0417"/>
<dbReference type="GeneID" id="878115"/>
<dbReference type="KEGG" id="pae:PA0417"/>
<dbReference type="PATRIC" id="fig|208964.12.peg.438"/>
<dbReference type="PseudoCAP" id="PA0417"/>
<dbReference type="HOGENOM" id="CLU_087840_1_0_6"/>
<dbReference type="InParanoid" id="O87005"/>
<dbReference type="OrthoDB" id="581870at2"/>
<dbReference type="PhylomeDB" id="O87005"/>
<dbReference type="BioCyc" id="PAER208964:G1FZ6-421-MONOMER"/>
<dbReference type="Proteomes" id="UP000002438">
    <property type="component" value="Chromosome"/>
</dbReference>
<dbReference type="GO" id="GO:0005886">
    <property type="term" value="C:plasma membrane"/>
    <property type="evidence" value="ECO:0000318"/>
    <property type="project" value="GO_Central"/>
</dbReference>
<dbReference type="GO" id="GO:0015171">
    <property type="term" value="F:amino acid transmembrane transporter activity"/>
    <property type="evidence" value="ECO:0000318"/>
    <property type="project" value="GO_Central"/>
</dbReference>
<dbReference type="GO" id="GO:0006865">
    <property type="term" value="P:amino acid transport"/>
    <property type="evidence" value="ECO:0000318"/>
    <property type="project" value="GO_Central"/>
</dbReference>
<dbReference type="InterPro" id="IPR001123">
    <property type="entry name" value="LeuE-type"/>
</dbReference>
<dbReference type="PANTHER" id="PTHR30086">
    <property type="entry name" value="ARGININE EXPORTER PROTEIN ARGO"/>
    <property type="match status" value="1"/>
</dbReference>
<dbReference type="PANTHER" id="PTHR30086:SF20">
    <property type="entry name" value="ARGININE EXPORTER PROTEIN ARGO-RELATED"/>
    <property type="match status" value="1"/>
</dbReference>
<dbReference type="Pfam" id="PF01810">
    <property type="entry name" value="LysE"/>
    <property type="match status" value="1"/>
</dbReference>